<evidence type="ECO:0000255" key="1">
    <source>
        <dbReference type="HAMAP-Rule" id="MF_00453"/>
    </source>
</evidence>
<dbReference type="EC" id="4.1.1.49" evidence="1"/>
<dbReference type="EMBL" id="CR378674">
    <property type="protein sequence ID" value="CAG21756.1"/>
    <property type="molecule type" value="Genomic_DNA"/>
</dbReference>
<dbReference type="SMR" id="Q6LLS2"/>
<dbReference type="STRING" id="298386.PBPRA3485"/>
<dbReference type="KEGG" id="ppr:PBPRA3485"/>
<dbReference type="eggNOG" id="COG1866">
    <property type="taxonomic scope" value="Bacteria"/>
</dbReference>
<dbReference type="HOGENOM" id="CLU_018247_0_1_6"/>
<dbReference type="UniPathway" id="UPA00138"/>
<dbReference type="Proteomes" id="UP000000593">
    <property type="component" value="Chromosome 1"/>
</dbReference>
<dbReference type="GO" id="GO:0005829">
    <property type="term" value="C:cytosol"/>
    <property type="evidence" value="ECO:0007669"/>
    <property type="project" value="TreeGrafter"/>
</dbReference>
<dbReference type="GO" id="GO:0005524">
    <property type="term" value="F:ATP binding"/>
    <property type="evidence" value="ECO:0007669"/>
    <property type="project" value="UniProtKB-UniRule"/>
</dbReference>
<dbReference type="GO" id="GO:0046872">
    <property type="term" value="F:metal ion binding"/>
    <property type="evidence" value="ECO:0007669"/>
    <property type="project" value="UniProtKB-KW"/>
</dbReference>
<dbReference type="GO" id="GO:0004612">
    <property type="term" value="F:phosphoenolpyruvate carboxykinase (ATP) activity"/>
    <property type="evidence" value="ECO:0007669"/>
    <property type="project" value="UniProtKB-UniRule"/>
</dbReference>
<dbReference type="GO" id="GO:0006094">
    <property type="term" value="P:gluconeogenesis"/>
    <property type="evidence" value="ECO:0007669"/>
    <property type="project" value="UniProtKB-UniRule"/>
</dbReference>
<dbReference type="CDD" id="cd00484">
    <property type="entry name" value="PEPCK_ATP"/>
    <property type="match status" value="1"/>
</dbReference>
<dbReference type="FunFam" id="2.170.8.10:FF:000001">
    <property type="entry name" value="Phosphoenolpyruvate carboxykinase (ATP)"/>
    <property type="match status" value="1"/>
</dbReference>
<dbReference type="FunFam" id="3.40.449.10:FF:000001">
    <property type="entry name" value="Phosphoenolpyruvate carboxykinase (ATP)"/>
    <property type="match status" value="1"/>
</dbReference>
<dbReference type="Gene3D" id="3.90.228.20">
    <property type="match status" value="1"/>
</dbReference>
<dbReference type="Gene3D" id="3.40.449.10">
    <property type="entry name" value="Phosphoenolpyruvate Carboxykinase, domain 1"/>
    <property type="match status" value="1"/>
</dbReference>
<dbReference type="Gene3D" id="2.170.8.10">
    <property type="entry name" value="Phosphoenolpyruvate Carboxykinase, domain 2"/>
    <property type="match status" value="1"/>
</dbReference>
<dbReference type="HAMAP" id="MF_00453">
    <property type="entry name" value="PEPCK_ATP"/>
    <property type="match status" value="1"/>
</dbReference>
<dbReference type="InterPro" id="IPR001272">
    <property type="entry name" value="PEP_carboxykinase_ATP"/>
</dbReference>
<dbReference type="InterPro" id="IPR013035">
    <property type="entry name" value="PEP_carboxykinase_C"/>
</dbReference>
<dbReference type="InterPro" id="IPR008210">
    <property type="entry name" value="PEP_carboxykinase_N"/>
</dbReference>
<dbReference type="InterPro" id="IPR015994">
    <property type="entry name" value="PEPCK_ATP_CS"/>
</dbReference>
<dbReference type="NCBIfam" id="TIGR00224">
    <property type="entry name" value="pckA"/>
    <property type="match status" value="1"/>
</dbReference>
<dbReference type="NCBIfam" id="NF006819">
    <property type="entry name" value="PRK09344.1-1"/>
    <property type="match status" value="1"/>
</dbReference>
<dbReference type="NCBIfam" id="NF006820">
    <property type="entry name" value="PRK09344.1-2"/>
    <property type="match status" value="1"/>
</dbReference>
<dbReference type="NCBIfam" id="NF006821">
    <property type="entry name" value="PRK09344.1-3"/>
    <property type="match status" value="1"/>
</dbReference>
<dbReference type="PANTHER" id="PTHR30031:SF0">
    <property type="entry name" value="PHOSPHOENOLPYRUVATE CARBOXYKINASE (ATP)"/>
    <property type="match status" value="1"/>
</dbReference>
<dbReference type="PANTHER" id="PTHR30031">
    <property type="entry name" value="PHOSPHOENOLPYRUVATE CARBOXYKINASE ATP"/>
    <property type="match status" value="1"/>
</dbReference>
<dbReference type="Pfam" id="PF01293">
    <property type="entry name" value="PEPCK_ATP"/>
    <property type="match status" value="1"/>
</dbReference>
<dbReference type="PIRSF" id="PIRSF006294">
    <property type="entry name" value="PEP_crbxkin"/>
    <property type="match status" value="1"/>
</dbReference>
<dbReference type="SUPFAM" id="SSF68923">
    <property type="entry name" value="PEP carboxykinase N-terminal domain"/>
    <property type="match status" value="1"/>
</dbReference>
<dbReference type="SUPFAM" id="SSF53795">
    <property type="entry name" value="PEP carboxykinase-like"/>
    <property type="match status" value="1"/>
</dbReference>
<dbReference type="PROSITE" id="PS00532">
    <property type="entry name" value="PEPCK_ATP"/>
    <property type="match status" value="1"/>
</dbReference>
<protein>
    <recommendedName>
        <fullName evidence="1">Phosphoenolpyruvate carboxykinase (ATP)</fullName>
        <shortName evidence="1">PCK</shortName>
        <shortName evidence="1">PEP carboxykinase</shortName>
        <shortName evidence="1">PEPCK</shortName>
        <ecNumber evidence="1">4.1.1.49</ecNumber>
    </recommendedName>
</protein>
<accession>Q6LLS2</accession>
<reference key="1">
    <citation type="journal article" date="2005" name="Science">
        <title>Life at depth: Photobacterium profundum genome sequence and expression analysis.</title>
        <authorList>
            <person name="Vezzi A."/>
            <person name="Campanaro S."/>
            <person name="D'Angelo M."/>
            <person name="Simonato F."/>
            <person name="Vitulo N."/>
            <person name="Lauro F.M."/>
            <person name="Cestaro A."/>
            <person name="Malacrida G."/>
            <person name="Simionati B."/>
            <person name="Cannata N."/>
            <person name="Romualdi C."/>
            <person name="Bartlett D.H."/>
            <person name="Valle G."/>
        </authorList>
    </citation>
    <scope>NUCLEOTIDE SEQUENCE [LARGE SCALE GENOMIC DNA]</scope>
    <source>
        <strain>ATCC BAA-1253 / SS9</strain>
    </source>
</reference>
<gene>
    <name evidence="1" type="primary">pckA</name>
    <name type="ordered locus">PBPRA3485</name>
</gene>
<comment type="function">
    <text evidence="1">Involved in the gluconeogenesis. Catalyzes the conversion of oxaloacetate (OAA) to phosphoenolpyruvate (PEP) through direct phosphoryl transfer between the nucleoside triphosphate and OAA.</text>
</comment>
<comment type="catalytic activity">
    <reaction evidence="1">
        <text>oxaloacetate + ATP = phosphoenolpyruvate + ADP + CO2</text>
        <dbReference type="Rhea" id="RHEA:18617"/>
        <dbReference type="ChEBI" id="CHEBI:16452"/>
        <dbReference type="ChEBI" id="CHEBI:16526"/>
        <dbReference type="ChEBI" id="CHEBI:30616"/>
        <dbReference type="ChEBI" id="CHEBI:58702"/>
        <dbReference type="ChEBI" id="CHEBI:456216"/>
        <dbReference type="EC" id="4.1.1.49"/>
    </reaction>
</comment>
<comment type="cofactor">
    <cofactor evidence="1">
        <name>Mn(2+)</name>
        <dbReference type="ChEBI" id="CHEBI:29035"/>
    </cofactor>
    <text evidence="1">Binds 1 Mn(2+) ion per subunit.</text>
</comment>
<comment type="pathway">
    <text evidence="1">Carbohydrate biosynthesis; gluconeogenesis.</text>
</comment>
<comment type="subunit">
    <text evidence="1">Monomer.</text>
</comment>
<comment type="subcellular location">
    <subcellularLocation>
        <location evidence="1">Cytoplasm</location>
    </subcellularLocation>
</comment>
<comment type="similarity">
    <text evidence="1">Belongs to the phosphoenolpyruvate carboxykinase (ATP) family.</text>
</comment>
<organism>
    <name type="scientific">Photobacterium profundum (strain SS9)</name>
    <dbReference type="NCBI Taxonomy" id="298386"/>
    <lineage>
        <taxon>Bacteria</taxon>
        <taxon>Pseudomonadati</taxon>
        <taxon>Pseudomonadota</taxon>
        <taxon>Gammaproteobacteria</taxon>
        <taxon>Vibrionales</taxon>
        <taxon>Vibrionaceae</taxon>
        <taxon>Photobacterium</taxon>
    </lineage>
</organism>
<keyword id="KW-0067">ATP-binding</keyword>
<keyword id="KW-0963">Cytoplasm</keyword>
<keyword id="KW-0210">Decarboxylase</keyword>
<keyword id="KW-0312">Gluconeogenesis</keyword>
<keyword id="KW-0456">Lyase</keyword>
<keyword id="KW-0464">Manganese</keyword>
<keyword id="KW-0479">Metal-binding</keyword>
<keyword id="KW-0547">Nucleotide-binding</keyword>
<keyword id="KW-1185">Reference proteome</keyword>
<sequence>MDLSEYGINNVTDVIRNPSFEVLFEEETKPGLEGYEKGIVTELGAVSVDTGIFTGRSPKDKFIVKDDTTRDTLWWADQGKNDNKAIDQKVWNELKVLVTKQLSGKRLFVVDGYCGTNPDTRLCIRVITEVAWQAHFVKNMFIRPTEEELASFKPDFVVMNGAKCTNEKWEEQGLNSENFTVFNLTEKMQLIGGTWYGGEMKKGMFAMMNYFLPLQGIASMHCSANMGENGDVAVFFGLSGTGKTTLSTDPKRALIGDDEHGWDDNGVFNFEGGCYAKTINLSKEAEPDIYNAIRRDALLENVTVRADGAIDFDDNSKTENTRVSYPIYHIENIVKPVSKGGHANKVIFLSADAFGVLPPVSKLTPAQTKYHFLSGFTAKLAGTERGITEPTPTFSACFGNAFLTLHPTQYAEVLVKRMEAAGAEAYLVNTGWNGTGKRISIQDTRAIIDAILNGSIDNAETKEMPIFNLEVPTSLPGVNPEILDPRDTYTDPLQWESKAQDLATRFINNFEKYTDTTEGAELVAAGPQLD</sequence>
<name>PCKA_PHOPR</name>
<feature type="chain" id="PRO_0000203831" description="Phosphoenolpyruvate carboxykinase (ATP)">
    <location>
        <begin position="1"/>
        <end position="530"/>
    </location>
</feature>
<feature type="binding site" evidence="1">
    <location>
        <position position="56"/>
    </location>
    <ligand>
        <name>substrate</name>
    </ligand>
</feature>
<feature type="binding site" evidence="1">
    <location>
        <position position="196"/>
    </location>
    <ligand>
        <name>substrate</name>
    </ligand>
</feature>
<feature type="binding site" evidence="1">
    <location>
        <position position="202"/>
    </location>
    <ligand>
        <name>ATP</name>
        <dbReference type="ChEBI" id="CHEBI:30616"/>
    </ligand>
</feature>
<feature type="binding site" evidence="1">
    <location>
        <position position="202"/>
    </location>
    <ligand>
        <name>Mn(2+)</name>
        <dbReference type="ChEBI" id="CHEBI:29035"/>
    </ligand>
</feature>
<feature type="binding site" evidence="1">
    <location>
        <position position="202"/>
    </location>
    <ligand>
        <name>substrate</name>
    </ligand>
</feature>
<feature type="binding site" evidence="1">
    <location>
        <position position="221"/>
    </location>
    <ligand>
        <name>ATP</name>
        <dbReference type="ChEBI" id="CHEBI:30616"/>
    </ligand>
</feature>
<feature type="binding site" evidence="1">
    <location>
        <position position="221"/>
    </location>
    <ligand>
        <name>Mn(2+)</name>
        <dbReference type="ChEBI" id="CHEBI:29035"/>
    </ligand>
</feature>
<feature type="binding site" evidence="1">
    <location>
        <begin position="237"/>
        <end position="245"/>
    </location>
    <ligand>
        <name>ATP</name>
        <dbReference type="ChEBI" id="CHEBI:30616"/>
    </ligand>
</feature>
<feature type="binding site" evidence="1">
    <location>
        <position position="258"/>
    </location>
    <ligand>
        <name>Mn(2+)</name>
        <dbReference type="ChEBI" id="CHEBI:29035"/>
    </ligand>
</feature>
<feature type="binding site" evidence="1">
    <location>
        <position position="286"/>
    </location>
    <ligand>
        <name>ATP</name>
        <dbReference type="ChEBI" id="CHEBI:30616"/>
    </ligand>
</feature>
<feature type="binding site" evidence="1">
    <location>
        <position position="322"/>
    </location>
    <ligand>
        <name>ATP</name>
        <dbReference type="ChEBI" id="CHEBI:30616"/>
    </ligand>
</feature>
<feature type="binding site" evidence="1">
    <location>
        <position position="322"/>
    </location>
    <ligand>
        <name>substrate</name>
    </ligand>
</feature>
<feature type="binding site" evidence="1">
    <location>
        <begin position="438"/>
        <end position="439"/>
    </location>
    <ligand>
        <name>ATP</name>
        <dbReference type="ChEBI" id="CHEBI:30616"/>
    </ligand>
</feature>
<feature type="binding site" evidence="1">
    <location>
        <position position="444"/>
    </location>
    <ligand>
        <name>ATP</name>
        <dbReference type="ChEBI" id="CHEBI:30616"/>
    </ligand>
</feature>
<proteinExistence type="inferred from homology"/>